<comment type="function">
    <text evidence="1">Catalyzes the transfer of the enolpyruvyl moiety of phosphoenolpyruvate (PEP) to the 5-hydroxyl of shikimate-3-phosphate (S3P) to produce enolpyruvyl shikimate-3-phosphate and inorganic phosphate.</text>
</comment>
<comment type="catalytic activity">
    <reaction evidence="1">
        <text>3-phosphoshikimate + phosphoenolpyruvate = 5-O-(1-carboxyvinyl)-3-phosphoshikimate + phosphate</text>
        <dbReference type="Rhea" id="RHEA:21256"/>
        <dbReference type="ChEBI" id="CHEBI:43474"/>
        <dbReference type="ChEBI" id="CHEBI:57701"/>
        <dbReference type="ChEBI" id="CHEBI:58702"/>
        <dbReference type="ChEBI" id="CHEBI:145989"/>
        <dbReference type="EC" id="2.5.1.19"/>
    </reaction>
    <physiologicalReaction direction="left-to-right" evidence="1">
        <dbReference type="Rhea" id="RHEA:21257"/>
    </physiologicalReaction>
</comment>
<comment type="pathway">
    <text evidence="1">Metabolic intermediate biosynthesis; chorismate biosynthesis; chorismate from D-erythrose 4-phosphate and phosphoenolpyruvate: step 6/7.</text>
</comment>
<comment type="subunit">
    <text evidence="1">Monomer.</text>
</comment>
<comment type="subcellular location">
    <subcellularLocation>
        <location evidence="1">Cytoplasm</location>
    </subcellularLocation>
</comment>
<comment type="similarity">
    <text evidence="1">Belongs to the EPSP synthase family.</text>
</comment>
<protein>
    <recommendedName>
        <fullName evidence="1">3-phosphoshikimate 1-carboxyvinyltransferase</fullName>
        <ecNumber evidence="1">2.5.1.19</ecNumber>
    </recommendedName>
    <alternativeName>
        <fullName evidence="1">5-enolpyruvylshikimate-3-phosphate synthase</fullName>
        <shortName evidence="1">EPSP synthase</shortName>
        <shortName evidence="1">EPSPS</shortName>
    </alternativeName>
</protein>
<evidence type="ECO:0000255" key="1">
    <source>
        <dbReference type="HAMAP-Rule" id="MF_00210"/>
    </source>
</evidence>
<sequence>MSSNTHHWIARRGTALQGSLAIPGDKSVSHRAVMFAALADGVSQIDGFLEGEDTRSTAAIFAKLGVRIETPSASQRIVHGVGVDGLQPPTGALDCGNAGTGMRLLAGLLAAQRFDSVLVGDESLSKRPMRRVTGPLAQMGARIDTQDDGTPPLRVHGGQALHGIDFVSPVASAQVKSAVLLAGLYAQGETSVTEPHPTRDYSERMLSAFGVDIDFSPGSARLRGGQRLRATDIAVPADFSSAAFFIVAASIVPDSEVVLRAVGLNPRRTGLLAALRLMGADISEENHAEHGGEPVADLRVRYAPLRGAQIPEALVPDMIDEFPALFVAATAASGQTVVTGAAELRVKESDRLAAMATGLRTLGVQVDETPDGATIHGGSIGSGVIESHGDHRIAMAFAIAGQLSSGSVRVNDVANVATSFPGFDTLAQGAGFGLEAAESG</sequence>
<gene>
    <name evidence="1" type="primary">aroA</name>
    <name type="ordered locus">XOO2266</name>
</gene>
<organism>
    <name type="scientific">Xanthomonas oryzae pv. oryzae (strain MAFF 311018)</name>
    <dbReference type="NCBI Taxonomy" id="342109"/>
    <lineage>
        <taxon>Bacteria</taxon>
        <taxon>Pseudomonadati</taxon>
        <taxon>Pseudomonadota</taxon>
        <taxon>Gammaproteobacteria</taxon>
        <taxon>Lysobacterales</taxon>
        <taxon>Lysobacteraceae</taxon>
        <taxon>Xanthomonas</taxon>
    </lineage>
</organism>
<name>AROA_XANOM</name>
<feature type="chain" id="PRO_1000012509" description="3-phosphoshikimate 1-carboxyvinyltransferase">
    <location>
        <begin position="1"/>
        <end position="440"/>
    </location>
</feature>
<feature type="active site" description="Proton acceptor" evidence="1">
    <location>
        <position position="320"/>
    </location>
</feature>
<feature type="binding site" evidence="1">
    <location>
        <position position="26"/>
    </location>
    <ligand>
        <name>3-phosphoshikimate</name>
        <dbReference type="ChEBI" id="CHEBI:145989"/>
    </ligand>
</feature>
<feature type="binding site" evidence="1">
    <location>
        <position position="26"/>
    </location>
    <ligand>
        <name>phosphoenolpyruvate</name>
        <dbReference type="ChEBI" id="CHEBI:58702"/>
    </ligand>
</feature>
<feature type="binding site" evidence="1">
    <location>
        <position position="27"/>
    </location>
    <ligand>
        <name>3-phosphoshikimate</name>
        <dbReference type="ChEBI" id="CHEBI:145989"/>
    </ligand>
</feature>
<feature type="binding site" evidence="1">
    <location>
        <position position="31"/>
    </location>
    <ligand>
        <name>3-phosphoshikimate</name>
        <dbReference type="ChEBI" id="CHEBI:145989"/>
    </ligand>
</feature>
<feature type="binding site" evidence="1">
    <location>
        <position position="99"/>
    </location>
    <ligand>
        <name>phosphoenolpyruvate</name>
        <dbReference type="ChEBI" id="CHEBI:58702"/>
    </ligand>
</feature>
<feature type="binding site" evidence="1">
    <location>
        <position position="127"/>
    </location>
    <ligand>
        <name>phosphoenolpyruvate</name>
        <dbReference type="ChEBI" id="CHEBI:58702"/>
    </ligand>
</feature>
<feature type="binding site" evidence="1">
    <location>
        <position position="172"/>
    </location>
    <ligand>
        <name>3-phosphoshikimate</name>
        <dbReference type="ChEBI" id="CHEBI:145989"/>
    </ligand>
</feature>
<feature type="binding site" evidence="1">
    <location>
        <position position="174"/>
    </location>
    <ligand>
        <name>3-phosphoshikimate</name>
        <dbReference type="ChEBI" id="CHEBI:145989"/>
    </ligand>
</feature>
<feature type="binding site" evidence="1">
    <location>
        <position position="174"/>
    </location>
    <ligand>
        <name>phosphoenolpyruvate</name>
        <dbReference type="ChEBI" id="CHEBI:58702"/>
    </ligand>
</feature>
<feature type="binding site" evidence="1">
    <location>
        <position position="320"/>
    </location>
    <ligand>
        <name>3-phosphoshikimate</name>
        <dbReference type="ChEBI" id="CHEBI:145989"/>
    </ligand>
</feature>
<feature type="binding site" evidence="1">
    <location>
        <position position="347"/>
    </location>
    <ligand>
        <name>3-phosphoshikimate</name>
        <dbReference type="ChEBI" id="CHEBI:145989"/>
    </ligand>
</feature>
<feature type="binding site" evidence="1">
    <location>
        <position position="351"/>
    </location>
    <ligand>
        <name>phosphoenolpyruvate</name>
        <dbReference type="ChEBI" id="CHEBI:58702"/>
    </ligand>
</feature>
<feature type="binding site" evidence="1">
    <location>
        <position position="392"/>
    </location>
    <ligand>
        <name>phosphoenolpyruvate</name>
        <dbReference type="ChEBI" id="CHEBI:58702"/>
    </ligand>
</feature>
<accession>Q2P356</accession>
<proteinExistence type="inferred from homology"/>
<keyword id="KW-0028">Amino-acid biosynthesis</keyword>
<keyword id="KW-0057">Aromatic amino acid biosynthesis</keyword>
<keyword id="KW-0963">Cytoplasm</keyword>
<keyword id="KW-0808">Transferase</keyword>
<reference key="1">
    <citation type="journal article" date="2005" name="Jpn. Agric. Res. Q.">
        <title>Genome sequence of Xanthomonas oryzae pv. oryzae suggests contribution of large numbers of effector genes and insertion sequences to its race diversity.</title>
        <authorList>
            <person name="Ochiai H."/>
            <person name="Inoue Y."/>
            <person name="Takeya M."/>
            <person name="Sasaki A."/>
            <person name="Kaku H."/>
        </authorList>
    </citation>
    <scope>NUCLEOTIDE SEQUENCE [LARGE SCALE GENOMIC DNA]</scope>
    <source>
        <strain>MAFF 311018</strain>
    </source>
</reference>
<dbReference type="EC" id="2.5.1.19" evidence="1"/>
<dbReference type="EMBL" id="AP008229">
    <property type="protein sequence ID" value="BAE69021.1"/>
    <property type="molecule type" value="Genomic_DNA"/>
</dbReference>
<dbReference type="RefSeq" id="WP_011259050.1">
    <property type="nucleotide sequence ID" value="NC_007705.1"/>
</dbReference>
<dbReference type="SMR" id="Q2P356"/>
<dbReference type="KEGG" id="xom:XOO2266"/>
<dbReference type="HOGENOM" id="CLU_024321_0_1_6"/>
<dbReference type="UniPathway" id="UPA00053">
    <property type="reaction ID" value="UER00089"/>
</dbReference>
<dbReference type="GO" id="GO:0005737">
    <property type="term" value="C:cytoplasm"/>
    <property type="evidence" value="ECO:0007669"/>
    <property type="project" value="UniProtKB-SubCell"/>
</dbReference>
<dbReference type="GO" id="GO:0003866">
    <property type="term" value="F:3-phosphoshikimate 1-carboxyvinyltransferase activity"/>
    <property type="evidence" value="ECO:0007669"/>
    <property type="project" value="UniProtKB-UniRule"/>
</dbReference>
<dbReference type="GO" id="GO:0008652">
    <property type="term" value="P:amino acid biosynthetic process"/>
    <property type="evidence" value="ECO:0007669"/>
    <property type="project" value="UniProtKB-KW"/>
</dbReference>
<dbReference type="GO" id="GO:0009073">
    <property type="term" value="P:aromatic amino acid family biosynthetic process"/>
    <property type="evidence" value="ECO:0007669"/>
    <property type="project" value="UniProtKB-KW"/>
</dbReference>
<dbReference type="GO" id="GO:0009423">
    <property type="term" value="P:chorismate biosynthetic process"/>
    <property type="evidence" value="ECO:0007669"/>
    <property type="project" value="UniProtKB-UniRule"/>
</dbReference>
<dbReference type="CDD" id="cd01556">
    <property type="entry name" value="EPSP_synthase"/>
    <property type="match status" value="1"/>
</dbReference>
<dbReference type="FunFam" id="3.65.10.10:FF:000005">
    <property type="entry name" value="3-phosphoshikimate 1-carboxyvinyltransferase"/>
    <property type="match status" value="1"/>
</dbReference>
<dbReference type="FunFam" id="3.65.10.10:FF:000006">
    <property type="entry name" value="3-phosphoshikimate 1-carboxyvinyltransferase"/>
    <property type="match status" value="1"/>
</dbReference>
<dbReference type="Gene3D" id="3.65.10.10">
    <property type="entry name" value="Enolpyruvate transferase domain"/>
    <property type="match status" value="2"/>
</dbReference>
<dbReference type="HAMAP" id="MF_00210">
    <property type="entry name" value="EPSP_synth"/>
    <property type="match status" value="1"/>
</dbReference>
<dbReference type="InterPro" id="IPR001986">
    <property type="entry name" value="Enolpyruvate_Tfrase_dom"/>
</dbReference>
<dbReference type="InterPro" id="IPR036968">
    <property type="entry name" value="Enolpyruvate_Tfrase_sf"/>
</dbReference>
<dbReference type="InterPro" id="IPR006264">
    <property type="entry name" value="EPSP_synthase"/>
</dbReference>
<dbReference type="InterPro" id="IPR023193">
    <property type="entry name" value="EPSP_synthase_CS"/>
</dbReference>
<dbReference type="InterPro" id="IPR013792">
    <property type="entry name" value="RNA3'P_cycl/enolpyr_Trfase_a/b"/>
</dbReference>
<dbReference type="NCBIfam" id="TIGR01356">
    <property type="entry name" value="aroA"/>
    <property type="match status" value="1"/>
</dbReference>
<dbReference type="PANTHER" id="PTHR21090">
    <property type="entry name" value="AROM/DEHYDROQUINATE SYNTHASE"/>
    <property type="match status" value="1"/>
</dbReference>
<dbReference type="PANTHER" id="PTHR21090:SF5">
    <property type="entry name" value="PENTAFUNCTIONAL AROM POLYPEPTIDE"/>
    <property type="match status" value="1"/>
</dbReference>
<dbReference type="Pfam" id="PF00275">
    <property type="entry name" value="EPSP_synthase"/>
    <property type="match status" value="1"/>
</dbReference>
<dbReference type="PIRSF" id="PIRSF000505">
    <property type="entry name" value="EPSPS"/>
    <property type="match status" value="1"/>
</dbReference>
<dbReference type="SUPFAM" id="SSF55205">
    <property type="entry name" value="EPT/RTPC-like"/>
    <property type="match status" value="1"/>
</dbReference>
<dbReference type="PROSITE" id="PS00104">
    <property type="entry name" value="EPSP_SYNTHASE_1"/>
    <property type="match status" value="1"/>
</dbReference>
<dbReference type="PROSITE" id="PS00885">
    <property type="entry name" value="EPSP_SYNTHASE_2"/>
    <property type="match status" value="1"/>
</dbReference>